<keyword id="KW-0173">Coenzyme A biosynthesis</keyword>
<keyword id="KW-0342">GTP-binding</keyword>
<keyword id="KW-0418">Kinase</keyword>
<keyword id="KW-0547">Nucleotide-binding</keyword>
<keyword id="KW-0808">Transferase</keyword>
<organism>
    <name type="scientific">Pyrococcus abyssi (strain GE5 / Orsay)</name>
    <dbReference type="NCBI Taxonomy" id="272844"/>
    <lineage>
        <taxon>Archaea</taxon>
        <taxon>Methanobacteriati</taxon>
        <taxon>Methanobacteriota</taxon>
        <taxon>Thermococci</taxon>
        <taxon>Thermococcales</taxon>
        <taxon>Thermococcaceae</taxon>
        <taxon>Pyrococcus</taxon>
    </lineage>
</organism>
<comment type="function">
    <text evidence="1">Catalyzes the GTP-dependent phosphorylation of the 3'-hydroxyl group of dephosphocoenzyme A to form coenzyme A (CoA).</text>
</comment>
<comment type="catalytic activity">
    <reaction evidence="1">
        <text>3'-dephospho-CoA + GTP = GDP + CoA + H(+)</text>
        <dbReference type="Rhea" id="RHEA:61156"/>
        <dbReference type="ChEBI" id="CHEBI:15378"/>
        <dbReference type="ChEBI" id="CHEBI:37565"/>
        <dbReference type="ChEBI" id="CHEBI:57287"/>
        <dbReference type="ChEBI" id="CHEBI:57328"/>
        <dbReference type="ChEBI" id="CHEBI:58189"/>
        <dbReference type="EC" id="2.7.1.237"/>
    </reaction>
</comment>
<comment type="pathway">
    <text evidence="1">Cofactor biosynthesis; coenzyme A biosynthesis.</text>
</comment>
<comment type="similarity">
    <text evidence="1">Belongs to the GTP-dependent DPCK family.</text>
</comment>
<proteinExistence type="inferred from homology"/>
<gene>
    <name type="ordered locus">PYRAB16870</name>
    <name type="ORF">PAB1106</name>
</gene>
<sequence>MKVLFKLPPSLRSELKKPVGELIEGDIPTPYLKVKDILTNEDPLVTVGDVVTENIMKVGLNPNLAIYDHKTERREYKPNIRSVEGVLITVKNPPGTITLPLLKAIKKAYSLLSHGKRVHIVVDGEEDLATIPAVLYAPIGTTVIYGQPKKGIVLIKVTNECKRRCAKIMRRMEVVRNGD</sequence>
<name>DPCKG_PYRAB</name>
<reference key="1">
    <citation type="journal article" date="2003" name="Mol. Microbiol.">
        <title>An integrated analysis of the genome of the hyperthermophilic archaeon Pyrococcus abyssi.</title>
        <authorList>
            <person name="Cohen G.N."/>
            <person name="Barbe V."/>
            <person name="Flament D."/>
            <person name="Galperin M."/>
            <person name="Heilig R."/>
            <person name="Lecompte O."/>
            <person name="Poch O."/>
            <person name="Prieur D."/>
            <person name="Querellou J."/>
            <person name="Ripp R."/>
            <person name="Thierry J.-C."/>
            <person name="Van der Oost J."/>
            <person name="Weissenbach J."/>
            <person name="Zivanovic Y."/>
            <person name="Forterre P."/>
        </authorList>
    </citation>
    <scope>NUCLEOTIDE SEQUENCE [LARGE SCALE GENOMIC DNA]</scope>
    <source>
        <strain>GE5 / Orsay</strain>
    </source>
</reference>
<reference key="2">
    <citation type="journal article" date="2012" name="Curr. Microbiol.">
        <title>Re-annotation of two hyperthermophilic archaea Pyrococcus abyssi GE5 and Pyrococcus furiosus DSM 3638.</title>
        <authorList>
            <person name="Gao J."/>
            <person name="Wang J."/>
        </authorList>
    </citation>
    <scope>GENOME REANNOTATION</scope>
    <source>
        <strain>GE5 / Orsay</strain>
    </source>
</reference>
<feature type="chain" id="PRO_0000137613" description="GTP-dependent dephospho-CoA kinase">
    <location>
        <begin position="1"/>
        <end position="179"/>
    </location>
</feature>
<feature type="binding site" evidence="1">
    <location>
        <position position="49"/>
    </location>
    <ligand>
        <name>GTP</name>
        <dbReference type="ChEBI" id="CHEBI:37565"/>
    </ligand>
</feature>
<feature type="binding site" evidence="1">
    <location>
        <position position="50"/>
    </location>
    <ligand>
        <name>GTP</name>
        <dbReference type="ChEBI" id="CHEBI:37565"/>
    </ligand>
</feature>
<feature type="binding site" evidence="1">
    <location>
        <position position="51"/>
    </location>
    <ligand>
        <name>GTP</name>
        <dbReference type="ChEBI" id="CHEBI:37565"/>
    </ligand>
</feature>
<feature type="binding site" evidence="1">
    <location>
        <position position="68"/>
    </location>
    <ligand>
        <name>GTP</name>
        <dbReference type="ChEBI" id="CHEBI:37565"/>
    </ligand>
</feature>
<feature type="binding site" evidence="1">
    <location>
        <position position="70"/>
    </location>
    <ligand>
        <name>GTP</name>
        <dbReference type="ChEBI" id="CHEBI:37565"/>
    </ligand>
</feature>
<feature type="binding site" evidence="1">
    <location>
        <position position="126"/>
    </location>
    <ligand>
        <name>GTP</name>
        <dbReference type="ChEBI" id="CHEBI:37565"/>
    </ligand>
</feature>
<accession>Q9UY21</accession>
<accession>G8ZK48</accession>
<evidence type="ECO:0000255" key="1">
    <source>
        <dbReference type="HAMAP-Rule" id="MF_00590"/>
    </source>
</evidence>
<dbReference type="EC" id="2.7.1.237" evidence="1"/>
<dbReference type="EMBL" id="AJ248288">
    <property type="protein sequence ID" value="CAB50591.1"/>
    <property type="molecule type" value="Genomic_DNA"/>
</dbReference>
<dbReference type="EMBL" id="HE613800">
    <property type="protein sequence ID" value="CCE71155.1"/>
    <property type="molecule type" value="Genomic_DNA"/>
</dbReference>
<dbReference type="PIR" id="A75019">
    <property type="entry name" value="A75019"/>
</dbReference>
<dbReference type="RefSeq" id="WP_010868805.1">
    <property type="nucleotide sequence ID" value="NC_000868.1"/>
</dbReference>
<dbReference type="SMR" id="Q9UY21"/>
<dbReference type="STRING" id="272844.PAB1106"/>
<dbReference type="KEGG" id="pab:PAB1106"/>
<dbReference type="PATRIC" id="fig|272844.11.peg.1801"/>
<dbReference type="eggNOG" id="arCOG04076">
    <property type="taxonomic scope" value="Archaea"/>
</dbReference>
<dbReference type="HOGENOM" id="CLU_120795_1_0_2"/>
<dbReference type="OrthoDB" id="15447at2157"/>
<dbReference type="PhylomeDB" id="Q9UY21"/>
<dbReference type="UniPathway" id="UPA00241"/>
<dbReference type="Proteomes" id="UP000000810">
    <property type="component" value="Chromosome"/>
</dbReference>
<dbReference type="Proteomes" id="UP000009139">
    <property type="component" value="Chromosome"/>
</dbReference>
<dbReference type="GO" id="GO:0005525">
    <property type="term" value="F:GTP binding"/>
    <property type="evidence" value="ECO:0007669"/>
    <property type="project" value="UniProtKB-UniRule"/>
</dbReference>
<dbReference type="GO" id="GO:0016301">
    <property type="term" value="F:kinase activity"/>
    <property type="evidence" value="ECO:0007669"/>
    <property type="project" value="UniProtKB-UniRule"/>
</dbReference>
<dbReference type="GO" id="GO:0015937">
    <property type="term" value="P:coenzyme A biosynthetic process"/>
    <property type="evidence" value="ECO:0007669"/>
    <property type="project" value="UniProtKB-UniRule"/>
</dbReference>
<dbReference type="HAMAP" id="MF_00590">
    <property type="entry name" value="Dephospho_CoA_kinase_GTP_dep"/>
    <property type="match status" value="1"/>
</dbReference>
<dbReference type="InterPro" id="IPR054930">
    <property type="entry name" value="deph_CoA_kin_Thcocales"/>
</dbReference>
<dbReference type="InterPro" id="IPR007164">
    <property type="entry name" value="GTP-dep_dephospho-CoA_kin"/>
</dbReference>
<dbReference type="NCBIfam" id="NF041125">
    <property type="entry name" value="deph_CoA_kin_Thcocales"/>
    <property type="match status" value="1"/>
</dbReference>
<dbReference type="NCBIfam" id="NF002246">
    <property type="entry name" value="PRK01160.1-1"/>
    <property type="match status" value="1"/>
</dbReference>
<dbReference type="PANTHER" id="PTHR40732:SF1">
    <property type="entry name" value="GTP-DEPENDENT DEPHOSPHO-COA KINASE"/>
    <property type="match status" value="1"/>
</dbReference>
<dbReference type="PANTHER" id="PTHR40732">
    <property type="entry name" value="UPF0218 PROTEIN TK1697"/>
    <property type="match status" value="1"/>
</dbReference>
<dbReference type="Pfam" id="PF04019">
    <property type="entry name" value="DUF359"/>
    <property type="match status" value="1"/>
</dbReference>
<dbReference type="PIRSF" id="PIRSF006533">
    <property type="entry name" value="UCP006533"/>
    <property type="match status" value="1"/>
</dbReference>
<protein>
    <recommendedName>
        <fullName evidence="1">GTP-dependent dephospho-CoA kinase</fullName>
        <ecNumber evidence="1">2.7.1.237</ecNumber>
    </recommendedName>
    <alternativeName>
        <fullName evidence="1">Dephospho-coenzyme A kinase</fullName>
        <shortName evidence="1">DPCK</shortName>
    </alternativeName>
</protein>